<organism>
    <name type="scientific">Methanococcus maripaludis (strain C5 / ATCC BAA-1333)</name>
    <dbReference type="NCBI Taxonomy" id="402880"/>
    <lineage>
        <taxon>Archaea</taxon>
        <taxon>Methanobacteriati</taxon>
        <taxon>Methanobacteriota</taxon>
        <taxon>Methanomada group</taxon>
        <taxon>Methanococci</taxon>
        <taxon>Methanococcales</taxon>
        <taxon>Methanococcaceae</taxon>
        <taxon>Methanococcus</taxon>
    </lineage>
</organism>
<dbReference type="EC" id="2.4.2.48" evidence="1"/>
<dbReference type="EMBL" id="CP000609">
    <property type="protein sequence ID" value="ABO35302.1"/>
    <property type="molecule type" value="Genomic_DNA"/>
</dbReference>
<dbReference type="RefSeq" id="WP_011868755.1">
    <property type="nucleotide sequence ID" value="NC_009135.1"/>
</dbReference>
<dbReference type="SMR" id="A4FYL8"/>
<dbReference type="STRING" id="402880.MmarC5_0996"/>
<dbReference type="GeneID" id="4928003"/>
<dbReference type="KEGG" id="mmq:MmarC5_0996"/>
<dbReference type="eggNOG" id="arCOG00989">
    <property type="taxonomic scope" value="Archaea"/>
</dbReference>
<dbReference type="eggNOG" id="arCOG00991">
    <property type="taxonomic scope" value="Archaea"/>
</dbReference>
<dbReference type="HOGENOM" id="CLU_030083_0_0_2"/>
<dbReference type="OrthoDB" id="6871at2157"/>
<dbReference type="UniPathway" id="UPA00393"/>
<dbReference type="Proteomes" id="UP000000253">
    <property type="component" value="Chromosome"/>
</dbReference>
<dbReference type="GO" id="GO:0005737">
    <property type="term" value="C:cytoplasm"/>
    <property type="evidence" value="ECO:0007669"/>
    <property type="project" value="TreeGrafter"/>
</dbReference>
<dbReference type="GO" id="GO:0016763">
    <property type="term" value="F:pentosyltransferase activity"/>
    <property type="evidence" value="ECO:0007669"/>
    <property type="project" value="UniProtKB-UniRule"/>
</dbReference>
<dbReference type="GO" id="GO:0003723">
    <property type="term" value="F:RNA binding"/>
    <property type="evidence" value="ECO:0007669"/>
    <property type="project" value="InterPro"/>
</dbReference>
<dbReference type="GO" id="GO:0008270">
    <property type="term" value="F:zinc ion binding"/>
    <property type="evidence" value="ECO:0007669"/>
    <property type="project" value="UniProtKB-UniRule"/>
</dbReference>
<dbReference type="GO" id="GO:0002099">
    <property type="term" value="P:tRNA wobble guanine modification"/>
    <property type="evidence" value="ECO:0007669"/>
    <property type="project" value="TreeGrafter"/>
</dbReference>
<dbReference type="CDD" id="cd21149">
    <property type="entry name" value="PUA_archaeosine_TGT"/>
    <property type="match status" value="1"/>
</dbReference>
<dbReference type="Gene3D" id="3.90.1020.10">
    <property type="entry name" value="ArcTGT, C1 domain"/>
    <property type="match status" value="1"/>
</dbReference>
<dbReference type="Gene3D" id="3.10.450.90">
    <property type="entry name" value="ArcTGT, C2 domain"/>
    <property type="match status" value="1"/>
</dbReference>
<dbReference type="Gene3D" id="2.30.130.10">
    <property type="entry name" value="PUA domain"/>
    <property type="match status" value="1"/>
</dbReference>
<dbReference type="Gene3D" id="3.20.20.105">
    <property type="entry name" value="Queuine tRNA-ribosyltransferase-like"/>
    <property type="match status" value="1"/>
</dbReference>
<dbReference type="HAMAP" id="MF_01634">
    <property type="entry name" value="TgtA_arch"/>
    <property type="match status" value="1"/>
</dbReference>
<dbReference type="InterPro" id="IPR050076">
    <property type="entry name" value="ArchSynthase1/Queuine_TRR"/>
</dbReference>
<dbReference type="InterPro" id="IPR038370">
    <property type="entry name" value="ArcTGT_C1_sf"/>
</dbReference>
<dbReference type="InterPro" id="IPR002478">
    <property type="entry name" value="PUA"/>
</dbReference>
<dbReference type="InterPro" id="IPR015947">
    <property type="entry name" value="PUA-like_sf"/>
</dbReference>
<dbReference type="InterPro" id="IPR036974">
    <property type="entry name" value="PUA_sf"/>
</dbReference>
<dbReference type="InterPro" id="IPR036511">
    <property type="entry name" value="TGT-like_sf"/>
</dbReference>
<dbReference type="InterPro" id="IPR029402">
    <property type="entry name" value="TGT_C2"/>
</dbReference>
<dbReference type="InterPro" id="IPR038250">
    <property type="entry name" value="TGT_C2_sf"/>
</dbReference>
<dbReference type="InterPro" id="IPR004804">
    <property type="entry name" value="TgtA"/>
</dbReference>
<dbReference type="InterPro" id="IPR002616">
    <property type="entry name" value="tRNA_ribo_trans-like"/>
</dbReference>
<dbReference type="NCBIfam" id="TIGR00432">
    <property type="entry name" value="arcsn_tRNA_tgt"/>
    <property type="match status" value="1"/>
</dbReference>
<dbReference type="NCBIfam" id="TIGR00449">
    <property type="entry name" value="tgt_general"/>
    <property type="match status" value="1"/>
</dbReference>
<dbReference type="PANTHER" id="PTHR46499">
    <property type="entry name" value="QUEUINE TRNA-RIBOSYLTRANSFERASE"/>
    <property type="match status" value="1"/>
</dbReference>
<dbReference type="PANTHER" id="PTHR46499:SF1">
    <property type="entry name" value="QUEUINE TRNA-RIBOSYLTRANSFERASE"/>
    <property type="match status" value="1"/>
</dbReference>
<dbReference type="Pfam" id="PF01472">
    <property type="entry name" value="PUA"/>
    <property type="match status" value="1"/>
</dbReference>
<dbReference type="Pfam" id="PF01702">
    <property type="entry name" value="TGT"/>
    <property type="match status" value="1"/>
</dbReference>
<dbReference type="Pfam" id="PF14810">
    <property type="entry name" value="TGT_C2"/>
    <property type="match status" value="1"/>
</dbReference>
<dbReference type="SMART" id="SM00359">
    <property type="entry name" value="PUA"/>
    <property type="match status" value="1"/>
</dbReference>
<dbReference type="SUPFAM" id="SSF88802">
    <property type="entry name" value="Pre-PUA domain"/>
    <property type="match status" value="1"/>
</dbReference>
<dbReference type="SUPFAM" id="SSF88697">
    <property type="entry name" value="PUA domain-like"/>
    <property type="match status" value="1"/>
</dbReference>
<dbReference type="SUPFAM" id="SSF51713">
    <property type="entry name" value="tRNA-guanine transglycosylase"/>
    <property type="match status" value="1"/>
</dbReference>
<dbReference type="PROSITE" id="PS50890">
    <property type="entry name" value="PUA"/>
    <property type="match status" value="1"/>
</dbReference>
<evidence type="ECO:0000255" key="1">
    <source>
        <dbReference type="HAMAP-Rule" id="MF_01634"/>
    </source>
</evidence>
<name>ATGT_METM5</name>
<reference key="1">
    <citation type="submission" date="2007-03" db="EMBL/GenBank/DDBJ databases">
        <title>Complete sequence of chromosome of Methanococcus maripaludis C5.</title>
        <authorList>
            <consortium name="US DOE Joint Genome Institute"/>
            <person name="Copeland A."/>
            <person name="Lucas S."/>
            <person name="Lapidus A."/>
            <person name="Barry K."/>
            <person name="Glavina del Rio T."/>
            <person name="Dalin E."/>
            <person name="Tice H."/>
            <person name="Pitluck S."/>
            <person name="Chertkov O."/>
            <person name="Brettin T."/>
            <person name="Bruce D."/>
            <person name="Han C."/>
            <person name="Detter J.C."/>
            <person name="Schmutz J."/>
            <person name="Larimer F."/>
            <person name="Land M."/>
            <person name="Hauser L."/>
            <person name="Kyrpides N."/>
            <person name="Mikhailova N."/>
            <person name="Sieprawska-Lupa M."/>
            <person name="Whitman W.B."/>
            <person name="Richardson P."/>
        </authorList>
    </citation>
    <scope>NUCLEOTIDE SEQUENCE [LARGE SCALE GENOMIC DNA]</scope>
    <source>
        <strain>C5 / ATCC BAA-1333</strain>
    </source>
</reference>
<keyword id="KW-0328">Glycosyltransferase</keyword>
<keyword id="KW-0479">Metal-binding</keyword>
<keyword id="KW-0808">Transferase</keyword>
<keyword id="KW-0819">tRNA processing</keyword>
<keyword id="KW-0862">Zinc</keyword>
<sequence length="649" mass="74505">MFEIKARDAMGRLGVITINGKKIETPTIMPVIHPNPKKQTVSMDLINKLADVVITNSYITYTTPELREIAETKGIHELIDFKNVVVTDSGSFQLSVYGDVNVGPMEIIDFQEKIGVDVGTILDIPTGPDVSREKAESDLLETFKRAKDSIKRRKEMGYKLALNGTIQGSKYLDLRQKSAEVMGKMDFDIYPIGAVVPLMEDYRYREVAEVILNSKMHLPTNKPVHLFGCGHPMLFALSVALGCDLFDSAAYALYAKNGRYLTAEGTLHLEDMKDLKSFPCTCKVCSEYTPKQLFNLEEKEKTRLLAEHNLYVTFEEIDRIKNAIKEGNLWELVEERCRSHPKLLNGLRVISKYMDFIEKHDPVSKKSGFFYTGYESMDRPEIYRHKQRLERIQYDKIYVTSVSENTSKPYHENLSNVPCDVDVLIKDSVFGLVPLNIDTMYPLAQNEVPDLYDFEKKYNNEFVSEFREKHTEKILDISTYNYYINHYGKKKDCDKINPDIFRIGKMLEYQYGAKILDDELMGKVKSRRSKNTGRIRNLLLEKEVLFTLRANDNFLIPAKYGAELLHEKLEFPNYRIVIDSSVEEFARAGKSVYSKFVKDCDHELRPFEEVLIVNSDDDLLAYGTTILNGQELMEFDYGVAATLRGGIKK</sequence>
<gene>
    <name evidence="1" type="primary">tgtA</name>
    <name type="ordered locus">MmarC5_0996</name>
</gene>
<accession>A4FYL8</accession>
<proteinExistence type="inferred from homology"/>
<feature type="chain" id="PRO_1000088166" description="tRNA-guanine(15) transglycosylase">
    <location>
        <begin position="1"/>
        <end position="649"/>
    </location>
</feature>
<feature type="domain" description="PUA" evidence="1">
    <location>
        <begin position="573"/>
        <end position="648"/>
    </location>
</feature>
<feature type="active site" description="Nucleophile" evidence="1">
    <location>
        <position position="88"/>
    </location>
</feature>
<feature type="binding site" evidence="1">
    <location>
        <position position="123"/>
    </location>
    <ligand>
        <name>substrate</name>
    </ligand>
</feature>
<feature type="binding site" evidence="1">
    <location>
        <position position="194"/>
    </location>
    <ligand>
        <name>substrate</name>
    </ligand>
</feature>
<feature type="binding site" evidence="1">
    <location>
        <position position="280"/>
    </location>
    <ligand>
        <name>Zn(2+)</name>
        <dbReference type="ChEBI" id="CHEBI:29105"/>
    </ligand>
</feature>
<feature type="binding site" evidence="1">
    <location>
        <position position="282"/>
    </location>
    <ligand>
        <name>Zn(2+)</name>
        <dbReference type="ChEBI" id="CHEBI:29105"/>
    </ligand>
</feature>
<feature type="binding site" evidence="1">
    <location>
        <position position="285"/>
    </location>
    <ligand>
        <name>Zn(2+)</name>
        <dbReference type="ChEBI" id="CHEBI:29105"/>
    </ligand>
</feature>
<comment type="function">
    <text evidence="1">Exchanges the guanine residue with 7-cyano-7-deazaguanine (preQ0) at position 15 in the dihydrouridine loop (D-loop) of archaeal tRNAs.</text>
</comment>
<comment type="catalytic activity">
    <reaction evidence="1">
        <text>guanosine(15) in tRNA + 7-cyano-7-deazaguanine = 7-cyano-7-carbaguanosine(15) in tRNA + guanine</text>
        <dbReference type="Rhea" id="RHEA:43164"/>
        <dbReference type="Rhea" id="RHEA-COMP:10371"/>
        <dbReference type="Rhea" id="RHEA-COMP:10372"/>
        <dbReference type="ChEBI" id="CHEBI:16235"/>
        <dbReference type="ChEBI" id="CHEBI:45075"/>
        <dbReference type="ChEBI" id="CHEBI:74269"/>
        <dbReference type="ChEBI" id="CHEBI:82850"/>
        <dbReference type="EC" id="2.4.2.48"/>
    </reaction>
</comment>
<comment type="cofactor">
    <cofactor evidence="1">
        <name>Zn(2+)</name>
        <dbReference type="ChEBI" id="CHEBI:29105"/>
    </cofactor>
    <text evidence="1">Binds 1 zinc ion per subunit.</text>
</comment>
<comment type="pathway">
    <text evidence="1">tRNA modification; archaeosine-tRNA biosynthesis.</text>
</comment>
<comment type="similarity">
    <text evidence="1">Belongs to the archaeosine tRNA-ribosyltransferase family.</text>
</comment>
<protein>
    <recommendedName>
        <fullName evidence="1">tRNA-guanine(15) transglycosylase</fullName>
        <ecNumber evidence="1">2.4.2.48</ecNumber>
    </recommendedName>
    <alternativeName>
        <fullName evidence="1">7-cyano-7-deazaguanine tRNA-ribosyltransferase</fullName>
    </alternativeName>
    <alternativeName>
        <fullName evidence="1">Archaeal tRNA-guanine transglycosylase</fullName>
    </alternativeName>
</protein>